<comment type="function">
    <text evidence="1">3'-to-5' exoribonuclease specific for small oligoribonucleotides.</text>
</comment>
<comment type="subcellular location">
    <subcellularLocation>
        <location evidence="1">Cytoplasm</location>
    </subcellularLocation>
</comment>
<comment type="similarity">
    <text evidence="1">Belongs to the oligoribonuclease family.</text>
</comment>
<keyword id="KW-0963">Cytoplasm</keyword>
<keyword id="KW-0269">Exonuclease</keyword>
<keyword id="KW-0378">Hydrolase</keyword>
<keyword id="KW-0540">Nuclease</keyword>
<keyword id="KW-1185">Reference proteome</keyword>
<organism>
    <name type="scientific">Photorhabdus laumondii subsp. laumondii (strain DSM 15139 / CIP 105565 / TT01)</name>
    <name type="common">Photorhabdus luminescens subsp. laumondii</name>
    <dbReference type="NCBI Taxonomy" id="243265"/>
    <lineage>
        <taxon>Bacteria</taxon>
        <taxon>Pseudomonadati</taxon>
        <taxon>Pseudomonadota</taxon>
        <taxon>Gammaproteobacteria</taxon>
        <taxon>Enterobacterales</taxon>
        <taxon>Morganellaceae</taxon>
        <taxon>Photorhabdus</taxon>
    </lineage>
</organism>
<dbReference type="EC" id="3.1.15.-" evidence="1"/>
<dbReference type="EMBL" id="BX571874">
    <property type="protein sequence ID" value="CAE16967.1"/>
    <property type="molecule type" value="Genomic_DNA"/>
</dbReference>
<dbReference type="RefSeq" id="WP_011148668.1">
    <property type="nucleotide sequence ID" value="NC_005126.1"/>
</dbReference>
<dbReference type="SMR" id="Q7MYS8"/>
<dbReference type="STRING" id="243265.plu4595"/>
<dbReference type="GeneID" id="48850810"/>
<dbReference type="KEGG" id="plu:plu4595"/>
<dbReference type="eggNOG" id="COG1949">
    <property type="taxonomic scope" value="Bacteria"/>
</dbReference>
<dbReference type="HOGENOM" id="CLU_064761_2_0_6"/>
<dbReference type="OrthoDB" id="9801329at2"/>
<dbReference type="Proteomes" id="UP000002514">
    <property type="component" value="Chromosome"/>
</dbReference>
<dbReference type="GO" id="GO:0005737">
    <property type="term" value="C:cytoplasm"/>
    <property type="evidence" value="ECO:0007669"/>
    <property type="project" value="UniProtKB-SubCell"/>
</dbReference>
<dbReference type="GO" id="GO:0000175">
    <property type="term" value="F:3'-5'-RNA exonuclease activity"/>
    <property type="evidence" value="ECO:0007669"/>
    <property type="project" value="InterPro"/>
</dbReference>
<dbReference type="GO" id="GO:0003676">
    <property type="term" value="F:nucleic acid binding"/>
    <property type="evidence" value="ECO:0007669"/>
    <property type="project" value="InterPro"/>
</dbReference>
<dbReference type="GO" id="GO:0006259">
    <property type="term" value="P:DNA metabolic process"/>
    <property type="evidence" value="ECO:0007669"/>
    <property type="project" value="UniProtKB-ARBA"/>
</dbReference>
<dbReference type="CDD" id="cd06135">
    <property type="entry name" value="Orn"/>
    <property type="match status" value="1"/>
</dbReference>
<dbReference type="FunFam" id="3.30.420.10:FF:000003">
    <property type="entry name" value="Oligoribonuclease"/>
    <property type="match status" value="1"/>
</dbReference>
<dbReference type="Gene3D" id="3.30.420.10">
    <property type="entry name" value="Ribonuclease H-like superfamily/Ribonuclease H"/>
    <property type="match status" value="1"/>
</dbReference>
<dbReference type="HAMAP" id="MF_00045">
    <property type="entry name" value="Oligoribonuclease"/>
    <property type="match status" value="1"/>
</dbReference>
<dbReference type="InterPro" id="IPR013520">
    <property type="entry name" value="Exonuclease_RNaseT/DNA_pol3"/>
</dbReference>
<dbReference type="InterPro" id="IPR022894">
    <property type="entry name" value="Oligoribonuclease"/>
</dbReference>
<dbReference type="InterPro" id="IPR012337">
    <property type="entry name" value="RNaseH-like_sf"/>
</dbReference>
<dbReference type="InterPro" id="IPR036397">
    <property type="entry name" value="RNaseH_sf"/>
</dbReference>
<dbReference type="NCBIfam" id="NF003765">
    <property type="entry name" value="PRK05359.1"/>
    <property type="match status" value="1"/>
</dbReference>
<dbReference type="PANTHER" id="PTHR11046">
    <property type="entry name" value="OLIGORIBONUCLEASE, MITOCHONDRIAL"/>
    <property type="match status" value="1"/>
</dbReference>
<dbReference type="PANTHER" id="PTHR11046:SF0">
    <property type="entry name" value="OLIGORIBONUCLEASE, MITOCHONDRIAL"/>
    <property type="match status" value="1"/>
</dbReference>
<dbReference type="Pfam" id="PF00929">
    <property type="entry name" value="RNase_T"/>
    <property type="match status" value="1"/>
</dbReference>
<dbReference type="SMART" id="SM00479">
    <property type="entry name" value="EXOIII"/>
    <property type="match status" value="1"/>
</dbReference>
<dbReference type="SUPFAM" id="SSF53098">
    <property type="entry name" value="Ribonuclease H-like"/>
    <property type="match status" value="1"/>
</dbReference>
<sequence length="181" mass="20968">MSKSEHNLIWIDLEMTGLDPERDRIIEIATIVTDANLNILDEGPVIAVHQSDEQLALMDKWNVRTHTGSGLVERVKASKIDDREAEKATIEFLEKWVPAGASPICGNSVSQDRRFLFRYMPELEAYFHYRYLDVSTLKELARRWKPEILAGLKKQNTHQALDDIRESVAELAYYREHFIQL</sequence>
<proteinExistence type="inferred from homology"/>
<gene>
    <name evidence="1" type="primary">orn</name>
    <name type="ordered locus">plu4595</name>
</gene>
<protein>
    <recommendedName>
        <fullName evidence="1">Oligoribonuclease</fullName>
        <ecNumber evidence="1">3.1.15.-</ecNumber>
    </recommendedName>
</protein>
<feature type="chain" id="PRO_0000111058" description="Oligoribonuclease">
    <location>
        <begin position="1"/>
        <end position="181"/>
    </location>
</feature>
<feature type="domain" description="Exonuclease" evidence="1">
    <location>
        <begin position="8"/>
        <end position="171"/>
    </location>
</feature>
<feature type="active site" evidence="1">
    <location>
        <position position="129"/>
    </location>
</feature>
<name>ORN_PHOLL</name>
<accession>Q7MYS8</accession>
<evidence type="ECO:0000255" key="1">
    <source>
        <dbReference type="HAMAP-Rule" id="MF_00045"/>
    </source>
</evidence>
<reference key="1">
    <citation type="journal article" date="2003" name="Nat. Biotechnol.">
        <title>The genome sequence of the entomopathogenic bacterium Photorhabdus luminescens.</title>
        <authorList>
            <person name="Duchaud E."/>
            <person name="Rusniok C."/>
            <person name="Frangeul L."/>
            <person name="Buchrieser C."/>
            <person name="Givaudan A."/>
            <person name="Taourit S."/>
            <person name="Bocs S."/>
            <person name="Boursaux-Eude C."/>
            <person name="Chandler M."/>
            <person name="Charles J.-F."/>
            <person name="Dassa E."/>
            <person name="Derose R."/>
            <person name="Derzelle S."/>
            <person name="Freyssinet G."/>
            <person name="Gaudriault S."/>
            <person name="Medigue C."/>
            <person name="Lanois A."/>
            <person name="Powell K."/>
            <person name="Siguier P."/>
            <person name="Vincent R."/>
            <person name="Wingate V."/>
            <person name="Zouine M."/>
            <person name="Glaser P."/>
            <person name="Boemare N."/>
            <person name="Danchin A."/>
            <person name="Kunst F."/>
        </authorList>
    </citation>
    <scope>NUCLEOTIDE SEQUENCE [LARGE SCALE GENOMIC DNA]</scope>
    <source>
        <strain>DSM 15139 / CIP 105565 / TT01</strain>
    </source>
</reference>